<dbReference type="EMBL" id="AC013403">
    <property type="protein sequence ID" value="AAX93171.1"/>
    <property type="molecule type" value="Genomic_DNA"/>
</dbReference>
<dbReference type="EMBL" id="CH471053">
    <property type="protein sequence ID" value="EAX00625.1"/>
    <property type="molecule type" value="Genomic_DNA"/>
</dbReference>
<dbReference type="EMBL" id="BC045671">
    <property type="protein sequence ID" value="AAH45671.1"/>
    <property type="molecule type" value="mRNA"/>
</dbReference>
<dbReference type="CCDS" id="CCDS1739.1"/>
<dbReference type="RefSeq" id="NP_848648.2">
    <property type="nucleotide sequence ID" value="NM_178553.4"/>
</dbReference>
<dbReference type="BioGRID" id="130932">
    <property type="interactions" value="26"/>
</dbReference>
<dbReference type="FunCoup" id="Q53SZ7">
    <property type="interactions" value="4"/>
</dbReference>
<dbReference type="IntAct" id="Q53SZ7">
    <property type="interactions" value="5"/>
</dbReference>
<dbReference type="STRING" id="9606.ENSP00000335017"/>
<dbReference type="GlyGen" id="Q53SZ7">
    <property type="glycosylation" value="2 sites, 1 O-linked glycan (1 site)"/>
</dbReference>
<dbReference type="iPTMnet" id="Q53SZ7"/>
<dbReference type="PhosphoSitePlus" id="Q53SZ7"/>
<dbReference type="BioMuta" id="PRR30"/>
<dbReference type="jPOST" id="Q53SZ7"/>
<dbReference type="MassIVE" id="Q53SZ7"/>
<dbReference type="PaxDb" id="9606-ENSP00000335017"/>
<dbReference type="PeptideAtlas" id="Q53SZ7"/>
<dbReference type="ProteomicsDB" id="62541"/>
<dbReference type="Antibodypedia" id="55555">
    <property type="antibodies" value="55 antibodies from 14 providers"/>
</dbReference>
<dbReference type="DNASU" id="339779"/>
<dbReference type="Ensembl" id="ENST00000335524.7">
    <property type="protein sequence ID" value="ENSP00000335017.3"/>
    <property type="gene ID" value="ENSG00000186143.11"/>
</dbReference>
<dbReference type="GeneID" id="339779"/>
<dbReference type="KEGG" id="hsa:339779"/>
<dbReference type="MANE-Select" id="ENST00000335524.7">
    <property type="protein sequence ID" value="ENSP00000335017.3"/>
    <property type="RefSeq nucleotide sequence ID" value="NM_178553.4"/>
    <property type="RefSeq protein sequence ID" value="NP_848648.2"/>
</dbReference>
<dbReference type="UCSC" id="uc002rjb.3">
    <property type="organism name" value="human"/>
</dbReference>
<dbReference type="AGR" id="HGNC:28677"/>
<dbReference type="CTD" id="339779"/>
<dbReference type="DisGeNET" id="339779"/>
<dbReference type="GeneCards" id="PRR30"/>
<dbReference type="HGNC" id="HGNC:28677">
    <property type="gene designation" value="PRR30"/>
</dbReference>
<dbReference type="HPA" id="ENSG00000186143">
    <property type="expression patterns" value="Tissue enriched (testis)"/>
</dbReference>
<dbReference type="neXtProt" id="NX_Q53SZ7"/>
<dbReference type="OpenTargets" id="ENSG00000186143"/>
<dbReference type="PharmGKB" id="PA162379215"/>
<dbReference type="VEuPathDB" id="HostDB:ENSG00000186143"/>
<dbReference type="eggNOG" id="ENOG502SSVJ">
    <property type="taxonomic scope" value="Eukaryota"/>
</dbReference>
<dbReference type="GeneTree" id="ENSGT00390000005754"/>
<dbReference type="HOGENOM" id="CLU_056385_0_0_1"/>
<dbReference type="InParanoid" id="Q53SZ7"/>
<dbReference type="OMA" id="HRRIAHD"/>
<dbReference type="OrthoDB" id="9807493at2759"/>
<dbReference type="PAN-GO" id="Q53SZ7">
    <property type="GO annotations" value="0 GO annotations based on evolutionary models"/>
</dbReference>
<dbReference type="PhylomeDB" id="Q53SZ7"/>
<dbReference type="TreeFam" id="TF338772"/>
<dbReference type="PathwayCommons" id="Q53SZ7"/>
<dbReference type="SignaLink" id="Q53SZ7"/>
<dbReference type="BioGRID-ORCS" id="339779">
    <property type="hits" value="19 hits in 1124 CRISPR screens"/>
</dbReference>
<dbReference type="GenomeRNAi" id="339779"/>
<dbReference type="Pharos" id="Q53SZ7">
    <property type="development level" value="Tdark"/>
</dbReference>
<dbReference type="PRO" id="PR:Q53SZ7"/>
<dbReference type="Proteomes" id="UP000005640">
    <property type="component" value="Chromosome 2"/>
</dbReference>
<dbReference type="RNAct" id="Q53SZ7">
    <property type="molecule type" value="protein"/>
</dbReference>
<dbReference type="Bgee" id="ENSG00000186143">
    <property type="expression patterns" value="Expressed in left testis and 43 other cell types or tissues"/>
</dbReference>
<dbReference type="ExpressionAtlas" id="Q53SZ7">
    <property type="expression patterns" value="baseline and differential"/>
</dbReference>
<dbReference type="InterPro" id="IPR031461">
    <property type="entry name" value="DUF4679"/>
</dbReference>
<dbReference type="PANTHER" id="PTHR22235">
    <property type="entry name" value="PROLINE-RICH PROTEIN 30"/>
    <property type="match status" value="1"/>
</dbReference>
<dbReference type="PANTHER" id="PTHR22235:SF2">
    <property type="entry name" value="PROLINE-RICH PROTEIN 30"/>
    <property type="match status" value="1"/>
</dbReference>
<dbReference type="Pfam" id="PF15728">
    <property type="entry name" value="DUF4679"/>
    <property type="match status" value="1"/>
</dbReference>
<evidence type="ECO:0000256" key="1">
    <source>
        <dbReference type="SAM" id="MobiDB-lite"/>
    </source>
</evidence>
<evidence type="ECO:0000269" key="2">
    <source>
    </source>
</evidence>
<name>PRR30_HUMAN</name>
<proteinExistence type="evidence at protein level"/>
<keyword id="KW-1267">Proteomics identification</keyword>
<keyword id="KW-1185">Reference proteome</keyword>
<comment type="interaction">
    <interactant intactId="EBI-12360827">
        <id>Q53SZ7</id>
    </interactant>
    <interactant intactId="EBI-3867333">
        <id>A8MQ03</id>
        <label>CYSRT1</label>
    </interactant>
    <organismsDiffer>false</organismsDiffer>
    <experiments>3</experiments>
</comment>
<comment type="interaction">
    <interactant intactId="EBI-12360827">
        <id>Q53SZ7</id>
    </interactant>
    <interactant intactId="EBI-11962084">
        <id>Q3LI66</id>
        <label>KRTAP6-2</label>
    </interactant>
    <organismsDiffer>false</organismsDiffer>
    <experiments>3</experiments>
</comment>
<comment type="interaction">
    <interactant intactId="EBI-12360827">
        <id>Q53SZ7</id>
    </interactant>
    <interactant intactId="EBI-743976">
        <id>Q96LM6</id>
        <label>SPMIP9</label>
    </interactant>
    <organismsDiffer>false</organismsDiffer>
    <experiments>3</experiments>
</comment>
<reference key="1">
    <citation type="journal article" date="2005" name="Nature">
        <title>Generation and annotation of the DNA sequences of human chromosomes 2 and 4.</title>
        <authorList>
            <person name="Hillier L.W."/>
            <person name="Graves T.A."/>
            <person name="Fulton R.S."/>
            <person name="Fulton L.A."/>
            <person name="Pepin K.H."/>
            <person name="Minx P."/>
            <person name="Wagner-McPherson C."/>
            <person name="Layman D."/>
            <person name="Wylie K."/>
            <person name="Sekhon M."/>
            <person name="Becker M.C."/>
            <person name="Fewell G.A."/>
            <person name="Delehaunty K.D."/>
            <person name="Miner T.L."/>
            <person name="Nash W.E."/>
            <person name="Kremitzki C."/>
            <person name="Oddy L."/>
            <person name="Du H."/>
            <person name="Sun H."/>
            <person name="Bradshaw-Cordum H."/>
            <person name="Ali J."/>
            <person name="Carter J."/>
            <person name="Cordes M."/>
            <person name="Harris A."/>
            <person name="Isak A."/>
            <person name="van Brunt A."/>
            <person name="Nguyen C."/>
            <person name="Du F."/>
            <person name="Courtney L."/>
            <person name="Kalicki J."/>
            <person name="Ozersky P."/>
            <person name="Abbott S."/>
            <person name="Armstrong J."/>
            <person name="Belter E.A."/>
            <person name="Caruso L."/>
            <person name="Cedroni M."/>
            <person name="Cotton M."/>
            <person name="Davidson T."/>
            <person name="Desai A."/>
            <person name="Elliott G."/>
            <person name="Erb T."/>
            <person name="Fronick C."/>
            <person name="Gaige T."/>
            <person name="Haakenson W."/>
            <person name="Haglund K."/>
            <person name="Holmes A."/>
            <person name="Harkins R."/>
            <person name="Kim K."/>
            <person name="Kruchowski S.S."/>
            <person name="Strong C.M."/>
            <person name="Grewal N."/>
            <person name="Goyea E."/>
            <person name="Hou S."/>
            <person name="Levy A."/>
            <person name="Martinka S."/>
            <person name="Mead K."/>
            <person name="McLellan M.D."/>
            <person name="Meyer R."/>
            <person name="Randall-Maher J."/>
            <person name="Tomlinson C."/>
            <person name="Dauphin-Kohlberg S."/>
            <person name="Kozlowicz-Reilly A."/>
            <person name="Shah N."/>
            <person name="Swearengen-Shahid S."/>
            <person name="Snider J."/>
            <person name="Strong J.T."/>
            <person name="Thompson J."/>
            <person name="Yoakum M."/>
            <person name="Leonard S."/>
            <person name="Pearman C."/>
            <person name="Trani L."/>
            <person name="Radionenko M."/>
            <person name="Waligorski J.E."/>
            <person name="Wang C."/>
            <person name="Rock S.M."/>
            <person name="Tin-Wollam A.-M."/>
            <person name="Maupin R."/>
            <person name="Latreille P."/>
            <person name="Wendl M.C."/>
            <person name="Yang S.-P."/>
            <person name="Pohl C."/>
            <person name="Wallis J.W."/>
            <person name="Spieth J."/>
            <person name="Bieri T.A."/>
            <person name="Berkowicz N."/>
            <person name="Nelson J.O."/>
            <person name="Osborne J."/>
            <person name="Ding L."/>
            <person name="Meyer R."/>
            <person name="Sabo A."/>
            <person name="Shotland Y."/>
            <person name="Sinha P."/>
            <person name="Wohldmann P.E."/>
            <person name="Cook L.L."/>
            <person name="Hickenbotham M.T."/>
            <person name="Eldred J."/>
            <person name="Williams D."/>
            <person name="Jones T.A."/>
            <person name="She X."/>
            <person name="Ciccarelli F.D."/>
            <person name="Izaurralde E."/>
            <person name="Taylor J."/>
            <person name="Schmutz J."/>
            <person name="Myers R.M."/>
            <person name="Cox D.R."/>
            <person name="Huang X."/>
            <person name="McPherson J.D."/>
            <person name="Mardis E.R."/>
            <person name="Clifton S.W."/>
            <person name="Warren W.C."/>
            <person name="Chinwalla A.T."/>
            <person name="Eddy S.R."/>
            <person name="Marra M.A."/>
            <person name="Ovcharenko I."/>
            <person name="Furey T.S."/>
            <person name="Miller W."/>
            <person name="Eichler E.E."/>
            <person name="Bork P."/>
            <person name="Suyama M."/>
            <person name="Torrents D."/>
            <person name="Waterston R.H."/>
            <person name="Wilson R.K."/>
        </authorList>
    </citation>
    <scope>NUCLEOTIDE SEQUENCE [LARGE SCALE GENOMIC DNA]</scope>
</reference>
<reference key="2">
    <citation type="submission" date="2005-09" db="EMBL/GenBank/DDBJ databases">
        <authorList>
            <person name="Mural R.J."/>
            <person name="Istrail S."/>
            <person name="Sutton G.G."/>
            <person name="Florea L."/>
            <person name="Halpern A.L."/>
            <person name="Mobarry C.M."/>
            <person name="Lippert R."/>
            <person name="Walenz B."/>
            <person name="Shatkay H."/>
            <person name="Dew I."/>
            <person name="Miller J.R."/>
            <person name="Flanigan M.J."/>
            <person name="Edwards N.J."/>
            <person name="Bolanos R."/>
            <person name="Fasulo D."/>
            <person name="Halldorsson B.V."/>
            <person name="Hannenhalli S."/>
            <person name="Turner R."/>
            <person name="Yooseph S."/>
            <person name="Lu F."/>
            <person name="Nusskern D.R."/>
            <person name="Shue B.C."/>
            <person name="Zheng X.H."/>
            <person name="Zhong F."/>
            <person name="Delcher A.L."/>
            <person name="Huson D.H."/>
            <person name="Kravitz S.A."/>
            <person name="Mouchard L."/>
            <person name="Reinert K."/>
            <person name="Remington K.A."/>
            <person name="Clark A.G."/>
            <person name="Waterman M.S."/>
            <person name="Eichler E.E."/>
            <person name="Adams M.D."/>
            <person name="Hunkapiller M.W."/>
            <person name="Myers E.W."/>
            <person name="Venter J.C."/>
        </authorList>
    </citation>
    <scope>NUCLEOTIDE SEQUENCE [LARGE SCALE GENOMIC DNA]</scope>
</reference>
<reference key="3">
    <citation type="journal article" date="2004" name="Genome Res.">
        <title>The status, quality, and expansion of the NIH full-length cDNA project: the Mammalian Gene Collection (MGC).</title>
        <authorList>
            <consortium name="The MGC Project Team"/>
        </authorList>
    </citation>
    <scope>NUCLEOTIDE SEQUENCE [LARGE SCALE MRNA]</scope>
    <scope>VARIANT GLY-194</scope>
    <source>
        <tissue>Testis</tissue>
    </source>
</reference>
<protein>
    <recommendedName>
        <fullName>Proline-rich protein 30</fullName>
    </recommendedName>
</protein>
<organism>
    <name type="scientific">Homo sapiens</name>
    <name type="common">Human</name>
    <dbReference type="NCBI Taxonomy" id="9606"/>
    <lineage>
        <taxon>Eukaryota</taxon>
        <taxon>Metazoa</taxon>
        <taxon>Chordata</taxon>
        <taxon>Craniata</taxon>
        <taxon>Vertebrata</taxon>
        <taxon>Euteleostomi</taxon>
        <taxon>Mammalia</taxon>
        <taxon>Eutheria</taxon>
        <taxon>Euarchontoglires</taxon>
        <taxon>Primates</taxon>
        <taxon>Haplorrhini</taxon>
        <taxon>Catarrhini</taxon>
        <taxon>Hominidae</taxon>
        <taxon>Homo</taxon>
    </lineage>
</organism>
<sequence length="412" mass="44690">MLPQNKDQVLPQTSVLPGRPTWGFSQLVDSSPHNLQPLSPHQGLPPSQPPFSSTQSRRPSSPPPASPSPGFQFGSCDSNSDFAPHPYSPSLPSSPTFFHQNYLSLPRPRASSPSNHWLYPSPPLTPSFSPSQPQNSSLPHSPCQSPSHPEELHSSTLTSPGPSPPSHRLHSNRQTWRWHQYRDTGSGSPGVVERCVPSEKDPAQFRDPGALAQALVVQLGHRRIAHDLRLLLLQHLWLGRTGQAPVVEYPICLVCLRPRSPSCPLPRYRTGPRLLAFPQLLPCVQGQESGPLRIGIGFGLRLPQGQARALHLLPEKRPKEAGPQGKATQACGHQLPASQPPAAQARADPVPGTPSQTRSFRSAGLQSPNSPRCFSGPPPRAPKQVTTSLKPRPCPGPKRPVSLELILQKSSV</sequence>
<gene>
    <name type="primary">PRR30</name>
    <name type="synonym">C2orf53</name>
</gene>
<feature type="chain" id="PRO_0000312276" description="Proline-rich protein 30">
    <location>
        <begin position="1"/>
        <end position="412"/>
    </location>
</feature>
<feature type="region of interest" description="Disordered" evidence="1">
    <location>
        <begin position="1"/>
        <end position="88"/>
    </location>
</feature>
<feature type="region of interest" description="Disordered" evidence="1">
    <location>
        <begin position="123"/>
        <end position="174"/>
    </location>
</feature>
<feature type="region of interest" description="Disordered" evidence="1">
    <location>
        <begin position="317"/>
        <end position="412"/>
    </location>
</feature>
<feature type="compositionally biased region" description="Polar residues" evidence="1">
    <location>
        <begin position="1"/>
        <end position="15"/>
    </location>
</feature>
<feature type="compositionally biased region" description="Polar residues" evidence="1">
    <location>
        <begin position="23"/>
        <end position="39"/>
    </location>
</feature>
<feature type="compositionally biased region" description="Low complexity" evidence="1">
    <location>
        <begin position="50"/>
        <end position="59"/>
    </location>
</feature>
<feature type="compositionally biased region" description="Low complexity" evidence="1">
    <location>
        <begin position="126"/>
        <end position="142"/>
    </location>
</feature>
<feature type="compositionally biased region" description="Low complexity" evidence="1">
    <location>
        <begin position="334"/>
        <end position="350"/>
    </location>
</feature>
<feature type="compositionally biased region" description="Polar residues" evidence="1">
    <location>
        <begin position="353"/>
        <end position="372"/>
    </location>
</feature>
<feature type="sequence variant" id="VAR_037469" description="In dbSNP:rs17855664." evidence="2">
    <original>R</original>
    <variation>G</variation>
    <location>
        <position position="194"/>
    </location>
</feature>
<feature type="sequence variant" id="VAR_037470" description="In dbSNP:rs3739097.">
    <original>R</original>
    <variation>C</variation>
    <location>
        <position position="222"/>
    </location>
</feature>
<accession>Q53SZ7</accession>
<accession>Q86UE2</accession>